<reference key="1">
    <citation type="journal article" date="2005" name="Nature">
        <title>Genomic sequence of the pathogenic and allergenic filamentous fungus Aspergillus fumigatus.</title>
        <authorList>
            <person name="Nierman W.C."/>
            <person name="Pain A."/>
            <person name="Anderson M.J."/>
            <person name="Wortman J.R."/>
            <person name="Kim H.S."/>
            <person name="Arroyo J."/>
            <person name="Berriman M."/>
            <person name="Abe K."/>
            <person name="Archer D.B."/>
            <person name="Bermejo C."/>
            <person name="Bennett J.W."/>
            <person name="Bowyer P."/>
            <person name="Chen D."/>
            <person name="Collins M."/>
            <person name="Coulsen R."/>
            <person name="Davies R."/>
            <person name="Dyer P.S."/>
            <person name="Farman M.L."/>
            <person name="Fedorova N."/>
            <person name="Fedorova N.D."/>
            <person name="Feldblyum T.V."/>
            <person name="Fischer R."/>
            <person name="Fosker N."/>
            <person name="Fraser A."/>
            <person name="Garcia J.L."/>
            <person name="Garcia M.J."/>
            <person name="Goble A."/>
            <person name="Goldman G.H."/>
            <person name="Gomi K."/>
            <person name="Griffith-Jones S."/>
            <person name="Gwilliam R."/>
            <person name="Haas B.J."/>
            <person name="Haas H."/>
            <person name="Harris D.E."/>
            <person name="Horiuchi H."/>
            <person name="Huang J."/>
            <person name="Humphray S."/>
            <person name="Jimenez J."/>
            <person name="Keller N."/>
            <person name="Khouri H."/>
            <person name="Kitamoto K."/>
            <person name="Kobayashi T."/>
            <person name="Konzack S."/>
            <person name="Kulkarni R."/>
            <person name="Kumagai T."/>
            <person name="Lafton A."/>
            <person name="Latge J.-P."/>
            <person name="Li W."/>
            <person name="Lord A."/>
            <person name="Lu C."/>
            <person name="Majoros W.H."/>
            <person name="May G.S."/>
            <person name="Miller B.L."/>
            <person name="Mohamoud Y."/>
            <person name="Molina M."/>
            <person name="Monod M."/>
            <person name="Mouyna I."/>
            <person name="Mulligan S."/>
            <person name="Murphy L.D."/>
            <person name="O'Neil S."/>
            <person name="Paulsen I."/>
            <person name="Penalva M.A."/>
            <person name="Pertea M."/>
            <person name="Price C."/>
            <person name="Pritchard B.L."/>
            <person name="Quail M.A."/>
            <person name="Rabbinowitsch E."/>
            <person name="Rawlins N."/>
            <person name="Rajandream M.A."/>
            <person name="Reichard U."/>
            <person name="Renauld H."/>
            <person name="Robson G.D."/>
            <person name="Rodriguez de Cordoba S."/>
            <person name="Rodriguez-Pena J.M."/>
            <person name="Ronning C.M."/>
            <person name="Rutter S."/>
            <person name="Salzberg S.L."/>
            <person name="Sanchez M."/>
            <person name="Sanchez-Ferrero J.C."/>
            <person name="Saunders D."/>
            <person name="Seeger K."/>
            <person name="Squares R."/>
            <person name="Squares S."/>
            <person name="Takeuchi M."/>
            <person name="Tekaia F."/>
            <person name="Turner G."/>
            <person name="Vazquez de Aldana C.R."/>
            <person name="Weidman J."/>
            <person name="White O."/>
            <person name="Woodward J.R."/>
            <person name="Yu J.-H."/>
            <person name="Fraser C.M."/>
            <person name="Galagan J.E."/>
            <person name="Asai K."/>
            <person name="Machida M."/>
            <person name="Hall N."/>
            <person name="Barrell B.G."/>
            <person name="Denning D.W."/>
        </authorList>
    </citation>
    <scope>NUCLEOTIDE SEQUENCE [LARGE SCALE GENOMIC DNA]</scope>
    <source>
        <strain>ATCC MYA-4609 / CBS 101355 / FGSC A1100 / Af293</strain>
    </source>
</reference>
<reference key="2">
    <citation type="submission" date="1997-10" db="EMBL/GenBank/DDBJ databases">
        <title>Diagnosis of allergic bronchopulmonary aspergillosis in patients with cystic fibrosis by IgE-specific serology with recombinant Aspergillus fumigatus allergens.</title>
        <authorList>
            <person name="Hemmann S."/>
            <person name="Nikolaizik W.H."/>
            <person name="Schoeni M.H."/>
            <person name="Blaser K."/>
            <person name="Crameri R."/>
        </authorList>
    </citation>
    <scope>NUCLEOTIDE SEQUENCE [MRNA] OF 37-322</scope>
    <source>
        <strain>ATCC 42202 / AF-102 / Ag 507</strain>
    </source>
</reference>
<dbReference type="EMBL" id="AAHF01000008">
    <property type="protein sequence ID" value="EAL87477.1"/>
    <property type="molecule type" value="Genomic_DNA"/>
</dbReference>
<dbReference type="EMBL" id="AJ001732">
    <property type="protein sequence ID" value="CAA04959.1"/>
    <property type="molecule type" value="mRNA"/>
</dbReference>
<dbReference type="RefSeq" id="XP_749515.1">
    <property type="nucleotide sequence ID" value="XM_744422.1"/>
</dbReference>
<dbReference type="STRING" id="330879.O60024"/>
<dbReference type="Allergome" id="3122">
    <property type="allergen name" value="Asp f 4.0101"/>
</dbReference>
<dbReference type="Allergome" id="74">
    <property type="allergen name" value="Asp f 4"/>
</dbReference>
<dbReference type="EnsemblFungi" id="EAL87477">
    <property type="protein sequence ID" value="EAL87477"/>
    <property type="gene ID" value="AFUA_2G03830"/>
</dbReference>
<dbReference type="GeneID" id="3506748"/>
<dbReference type="KEGG" id="afm:AFUA_2G03830"/>
<dbReference type="VEuPathDB" id="FungiDB:Afu2g03830"/>
<dbReference type="eggNOG" id="ENOG502SN6Y">
    <property type="taxonomic scope" value="Eukaryota"/>
</dbReference>
<dbReference type="HOGENOM" id="CLU_043430_1_0_1"/>
<dbReference type="InParanoid" id="O60024"/>
<dbReference type="OMA" id="ASQYKHV"/>
<dbReference type="OrthoDB" id="118256at2759"/>
<dbReference type="Proteomes" id="UP000002530">
    <property type="component" value="Chromosome 2"/>
</dbReference>
<dbReference type="GO" id="GO:0005576">
    <property type="term" value="C:extracellular region"/>
    <property type="evidence" value="ECO:0000318"/>
    <property type="project" value="GO_Central"/>
</dbReference>
<dbReference type="GO" id="GO:0019863">
    <property type="term" value="F:IgE binding"/>
    <property type="evidence" value="ECO:0000314"/>
    <property type="project" value="AspGD"/>
</dbReference>
<dbReference type="InterPro" id="IPR038903">
    <property type="entry name" value="Allergen_Asp_f_4"/>
</dbReference>
<dbReference type="PANTHER" id="PTHR42039:SF2">
    <property type="entry name" value="ALLERGEN ASP F4 (AFU_ORTHOLOGUE AFUA_2G03830)-RELATED"/>
    <property type="match status" value="1"/>
</dbReference>
<dbReference type="PANTHER" id="PTHR42039">
    <property type="entry name" value="PUTATIVE (AFU_ORTHOLOGUE AFUA_3G02940)-RELATED"/>
    <property type="match status" value="1"/>
</dbReference>
<dbReference type="Pfam" id="PF25312">
    <property type="entry name" value="Allergen_Asp_f_4"/>
    <property type="match status" value="1"/>
</dbReference>
<protein>
    <recommendedName>
        <fullName>Allergen Asp f 4</fullName>
    </recommendedName>
    <allergenName>Asp f 4</allergenName>
</protein>
<organism>
    <name type="scientific">Aspergillus fumigatus (strain ATCC MYA-4609 / CBS 101355 / FGSC A1100 / Af293)</name>
    <name type="common">Neosartorya fumigata</name>
    <dbReference type="NCBI Taxonomy" id="330879"/>
    <lineage>
        <taxon>Eukaryota</taxon>
        <taxon>Fungi</taxon>
        <taxon>Dikarya</taxon>
        <taxon>Ascomycota</taxon>
        <taxon>Pezizomycotina</taxon>
        <taxon>Eurotiomycetes</taxon>
        <taxon>Eurotiomycetidae</taxon>
        <taxon>Eurotiales</taxon>
        <taxon>Aspergillaceae</taxon>
        <taxon>Aspergillus</taxon>
        <taxon>Aspergillus subgen. Fumigati</taxon>
    </lineage>
</organism>
<comment type="subcellular location">
    <subcellularLocation>
        <location evidence="3">Secreted</location>
    </subcellularLocation>
</comment>
<comment type="allergen">
    <text>Causes an allergic reaction in human. Binds to IgE.</text>
</comment>
<proteinExistence type="evidence at protein level"/>
<gene>
    <name type="ORF">AFUA_2G03830</name>
</gene>
<feature type="signal peptide" evidence="1">
    <location>
        <begin position="1"/>
        <end position="20"/>
    </location>
</feature>
<feature type="chain" id="PRO_0000043341" description="Allergen Asp f 4">
    <location>
        <begin position="21"/>
        <end position="322"/>
    </location>
</feature>
<feature type="region of interest" description="Disordered" evidence="2">
    <location>
        <begin position="80"/>
        <end position="109"/>
    </location>
</feature>
<feature type="compositionally biased region" description="Low complexity" evidence="2">
    <location>
        <begin position="80"/>
        <end position="105"/>
    </location>
</feature>
<feature type="sequence conflict" description="In Ref. 2; CAA04959." evidence="3" ref="2">
    <original>R</original>
    <variation>G</variation>
    <location>
        <position position="37"/>
    </location>
</feature>
<feature type="sequence conflict" description="In Ref. 2; CAA04959." evidence="3" ref="2">
    <original>Q</original>
    <variation>H</variation>
    <location>
        <position position="247"/>
    </location>
</feature>
<name>ALL4_ASPFU</name>
<evidence type="ECO:0000255" key="1"/>
<evidence type="ECO:0000256" key="2">
    <source>
        <dbReference type="SAM" id="MobiDB-lite"/>
    </source>
</evidence>
<evidence type="ECO:0000305" key="3"/>
<accession>O60024</accession>
<accession>Q4WHX8</accession>
<sequence>MQLKNSMLLLTALAAGSSVARLHGHERRHLHHAGEKREVGDTVYATINGVLVSWINEWSGEAKTSDAPVSQATPVSNAVAAAAAASTPEPSSSHSDSSSSSGVSADWTNTPAEGEYCTDGFGGRTEPSGSGIFYKGNVGKPWGSNIIEVSPENAKKYKHVAQFVGSDTDPWTVVFWNKIGPDGGLTGWYGNSALTLHLEAGETKYVAFDENSQGAWGAAKGDELPKDQFGGYSCTWGEFDFDSKINQGWSGWDVSAIQAENAHHEVQGMKICNHAGELCSIISHGLSKVIDAYTADLAGVDGIGGKVVPGPTRLVVNLDYKE</sequence>
<keyword id="KW-0020">Allergen</keyword>
<keyword id="KW-1185">Reference proteome</keyword>
<keyword id="KW-0964">Secreted</keyword>
<keyword id="KW-0732">Signal</keyword>